<proteinExistence type="evidence at protein level"/>
<dbReference type="EMBL" id="K01940">
    <property type="protein sequence ID" value="AAA31014.1"/>
    <property type="molecule type" value="mRNA"/>
</dbReference>
<dbReference type="PIR" id="A05084">
    <property type="entry name" value="GMPGCP"/>
</dbReference>
<dbReference type="RefSeq" id="NP_999402.1">
    <property type="nucleotide sequence ID" value="NM_214237.2"/>
</dbReference>
<dbReference type="FunCoup" id="P01356">
    <property type="interactions" value="1070"/>
</dbReference>
<dbReference type="STRING" id="9823.ENSSSCP00000012023"/>
<dbReference type="BindingDB" id="P01356"/>
<dbReference type="PaxDb" id="9823-ENSSSCP00000012023"/>
<dbReference type="Ensembl" id="ENSSSCT00000012346.5">
    <property type="protein sequence ID" value="ENSSSCP00000012023.4"/>
    <property type="gene ID" value="ENSSSCG00000011277.5"/>
</dbReference>
<dbReference type="Ensembl" id="ENSSSCT00015062271.1">
    <property type="protein sequence ID" value="ENSSSCP00015024987.1"/>
    <property type="gene ID" value="ENSSSCG00015046493.1"/>
</dbReference>
<dbReference type="Ensembl" id="ENSSSCT00070019436.1">
    <property type="protein sequence ID" value="ENSSSCP00070016171.1"/>
    <property type="gene ID" value="ENSSSCG00070010008.1"/>
</dbReference>
<dbReference type="Ensembl" id="ENSSSCT00115007047">
    <property type="protein sequence ID" value="ENSSSCP00115006608"/>
    <property type="gene ID" value="ENSSSCG00115004100"/>
</dbReference>
<dbReference type="GeneID" id="397468"/>
<dbReference type="KEGG" id="ssc:397468"/>
<dbReference type="CTD" id="885"/>
<dbReference type="VGNC" id="VGNC:86334">
    <property type="gene designation" value="CCK"/>
</dbReference>
<dbReference type="eggNOG" id="ENOG502S472">
    <property type="taxonomic scope" value="Eukaryota"/>
</dbReference>
<dbReference type="GeneTree" id="ENSGT00390000003571"/>
<dbReference type="HOGENOM" id="CLU_169783_0_0_1"/>
<dbReference type="InParanoid" id="P01356"/>
<dbReference type="OrthoDB" id="9862982at2759"/>
<dbReference type="TreeFam" id="TF333419"/>
<dbReference type="Reactome" id="R-SSC-375276">
    <property type="pathway name" value="Peptide ligand-binding receptors"/>
</dbReference>
<dbReference type="Reactome" id="R-SSC-416476">
    <property type="pathway name" value="G alpha (q) signalling events"/>
</dbReference>
<dbReference type="Proteomes" id="UP000008227">
    <property type="component" value="Chromosome 13"/>
</dbReference>
<dbReference type="Proteomes" id="UP000314985">
    <property type="component" value="Chromosome 13"/>
</dbReference>
<dbReference type="Proteomes" id="UP000694570">
    <property type="component" value="Unplaced"/>
</dbReference>
<dbReference type="Proteomes" id="UP000694571">
    <property type="component" value="Unplaced"/>
</dbReference>
<dbReference type="Proteomes" id="UP000694720">
    <property type="component" value="Unplaced"/>
</dbReference>
<dbReference type="Proteomes" id="UP000694722">
    <property type="component" value="Unplaced"/>
</dbReference>
<dbReference type="Proteomes" id="UP000694723">
    <property type="component" value="Unplaced"/>
</dbReference>
<dbReference type="Proteomes" id="UP000694724">
    <property type="component" value="Unplaced"/>
</dbReference>
<dbReference type="Proteomes" id="UP000694725">
    <property type="component" value="Unplaced"/>
</dbReference>
<dbReference type="Proteomes" id="UP000694726">
    <property type="component" value="Unplaced"/>
</dbReference>
<dbReference type="Proteomes" id="UP000694727">
    <property type="component" value="Unplaced"/>
</dbReference>
<dbReference type="Proteomes" id="UP000694728">
    <property type="component" value="Unplaced"/>
</dbReference>
<dbReference type="GO" id="GO:0030424">
    <property type="term" value="C:axon"/>
    <property type="evidence" value="ECO:0000250"/>
    <property type="project" value="UniProtKB"/>
</dbReference>
<dbReference type="GO" id="GO:0005576">
    <property type="term" value="C:extracellular region"/>
    <property type="evidence" value="ECO:0007669"/>
    <property type="project" value="UniProtKB-SubCell"/>
</dbReference>
<dbReference type="GO" id="GO:0005184">
    <property type="term" value="F:neuropeptide hormone activity"/>
    <property type="evidence" value="ECO:0000250"/>
    <property type="project" value="UniProtKB"/>
</dbReference>
<dbReference type="GO" id="GO:0051428">
    <property type="term" value="F:peptide hormone receptor binding"/>
    <property type="evidence" value="ECO:0007669"/>
    <property type="project" value="Ensembl"/>
</dbReference>
<dbReference type="GO" id="GO:0007409">
    <property type="term" value="P:axonogenesis"/>
    <property type="evidence" value="ECO:0000250"/>
    <property type="project" value="UniProtKB"/>
</dbReference>
<dbReference type="GO" id="GO:0038188">
    <property type="term" value="P:cholecystokinin signaling pathway"/>
    <property type="evidence" value="ECO:0007669"/>
    <property type="project" value="Ensembl"/>
</dbReference>
<dbReference type="GO" id="GO:0007586">
    <property type="term" value="P:digestion"/>
    <property type="evidence" value="ECO:0007669"/>
    <property type="project" value="InterPro"/>
</dbReference>
<dbReference type="GO" id="GO:0042755">
    <property type="term" value="P:eating behavior"/>
    <property type="evidence" value="ECO:0000250"/>
    <property type="project" value="UniProtKB"/>
</dbReference>
<dbReference type="GO" id="GO:0001764">
    <property type="term" value="P:neuron migration"/>
    <property type="evidence" value="ECO:0000250"/>
    <property type="project" value="UniProtKB"/>
</dbReference>
<dbReference type="InterPro" id="IPR015499">
    <property type="entry name" value="CCK-like"/>
</dbReference>
<dbReference type="InterPro" id="IPR001651">
    <property type="entry name" value="Gastrin/CCK"/>
</dbReference>
<dbReference type="InterPro" id="IPR013152">
    <property type="entry name" value="Gastrin/cholecystokinin_CS"/>
</dbReference>
<dbReference type="PANTHER" id="PTHR10786">
    <property type="entry name" value="CHOLECYSTOKININ"/>
    <property type="match status" value="1"/>
</dbReference>
<dbReference type="PANTHER" id="PTHR10786:SF0">
    <property type="entry name" value="CHOLECYSTOKININ"/>
    <property type="match status" value="1"/>
</dbReference>
<dbReference type="Pfam" id="PF00918">
    <property type="entry name" value="Gastrin"/>
    <property type="match status" value="1"/>
</dbReference>
<dbReference type="SMART" id="SM00029">
    <property type="entry name" value="GASTRIN"/>
    <property type="match status" value="1"/>
</dbReference>
<dbReference type="PROSITE" id="PS00259">
    <property type="entry name" value="GASTRIN"/>
    <property type="match status" value="1"/>
</dbReference>
<feature type="signal peptide" evidence="3">
    <location>
        <begin position="1"/>
        <end position="20"/>
    </location>
</feature>
<feature type="chain" id="PRO_0000010558" description="Cholecystokinin">
    <location>
        <begin position="21"/>
        <end position="114"/>
    </location>
</feature>
<feature type="peptide" id="PRO_0000010559" description="Cholecystokinin-58" evidence="2">
    <location>
        <begin position="45"/>
        <end position="102"/>
    </location>
</feature>
<feature type="peptide" id="PRO_0000306314" description="Cholecystokinin-58 desnonopeptide" evidence="2">
    <location>
        <begin position="46"/>
        <end position="94"/>
    </location>
</feature>
<feature type="peptide" id="PRO_0000010560" description="Cholecystokinin-39" evidence="2">
    <location>
        <begin position="64"/>
        <end position="102"/>
    </location>
</feature>
<feature type="peptide" id="PRO_0000010561" description="Cholecystokinin-33" evidence="7">
    <location>
        <begin position="70"/>
        <end position="102"/>
    </location>
</feature>
<feature type="peptide" id="PRO_0000306315" description="Cholecystokinin-25" evidence="2">
    <location>
        <begin position="79"/>
        <end position="103"/>
    </location>
</feature>
<feature type="peptide" id="PRO_0000306316" description="Cholecystokinin-18" evidence="2">
    <location>
        <begin position="86"/>
        <end position="103"/>
    </location>
</feature>
<feature type="peptide" id="PRO_0000010562" description="Cholecystokinin-12" evidence="4">
    <location>
        <begin position="91"/>
        <end position="102"/>
    </location>
</feature>
<feature type="peptide" id="PRO_0000010563" description="Cholecystokinin-8" evidence="2">
    <location>
        <begin position="95"/>
        <end position="102"/>
    </location>
</feature>
<feature type="peptide" id="PRO_0000306317" description="Cholecystokinin-7" evidence="2">
    <location>
        <begin position="97"/>
        <end position="103"/>
    </location>
</feature>
<feature type="peptide" id="PRO_0000306318" description="Cholecystokinin-5" evidence="2">
    <location>
        <begin position="99"/>
        <end position="103"/>
    </location>
</feature>
<feature type="propeptide" id="PRO_0000010564">
    <location>
        <begin position="106"/>
        <end position="114"/>
    </location>
</feature>
<feature type="modified residue" description="Sulfotyrosine" evidence="4 6">
    <location>
        <position position="96"/>
    </location>
</feature>
<feature type="modified residue" description="Phenylalanine amide" evidence="4">
    <location>
        <position position="102"/>
    </location>
</feature>
<feature type="modified residue" description="Sulfotyrosine" evidence="6">
    <location>
        <position position="110"/>
    </location>
</feature>
<feature type="modified residue" description="Sulfotyrosine" evidence="6">
    <location>
        <position position="112"/>
    </location>
</feature>
<keyword id="KW-0027">Amidation</keyword>
<keyword id="KW-0165">Cleavage on pair of basic residues</keyword>
<keyword id="KW-0903">Direct protein sequencing</keyword>
<keyword id="KW-0372">Hormone</keyword>
<keyword id="KW-1185">Reference proteome</keyword>
<keyword id="KW-0964">Secreted</keyword>
<keyword id="KW-0732">Signal</keyword>
<keyword id="KW-0765">Sulfation</keyword>
<gene>
    <name type="primary">CCK</name>
</gene>
<name>CCKN_PIG</name>
<protein>
    <recommendedName>
        <fullName>Cholecystokinin</fullName>
        <shortName>CCK</shortName>
    </recommendedName>
    <component>
        <recommendedName>
            <fullName>Cholecystokinin-58</fullName>
            <shortName>CCK58</shortName>
        </recommendedName>
    </component>
    <component>
        <recommendedName>
            <fullName>Cholecystokinin-58 desnonopeptide</fullName>
        </recommendedName>
        <alternativeName>
            <fullName>(1-49)-CCK58</fullName>
        </alternativeName>
    </component>
    <component>
        <recommendedName>
            <fullName>Cholecystokinin-39</fullName>
            <shortName>CCK39</shortName>
        </recommendedName>
    </component>
    <component>
        <recommendedName>
            <fullName>Cholecystokinin-33</fullName>
            <shortName>CCK33</shortName>
        </recommendedName>
    </component>
    <component>
        <recommendedName>
            <fullName>Cholecystokinin-25</fullName>
            <shortName>CCK25</shortName>
        </recommendedName>
    </component>
    <component>
        <recommendedName>
            <fullName>Cholecystokinin-18</fullName>
            <shortName>CCK18</shortName>
        </recommendedName>
    </component>
    <component>
        <recommendedName>
            <fullName>Cholecystokinin-12</fullName>
            <shortName>CCK12</shortName>
        </recommendedName>
    </component>
    <component>
        <recommendedName>
            <fullName>Cholecystokinin-8</fullName>
            <shortName>CCK8</shortName>
        </recommendedName>
    </component>
    <component>
        <recommendedName>
            <fullName>Cholecystokinin-7</fullName>
            <shortName>CCK7</shortName>
        </recommendedName>
    </component>
    <component>
        <recommendedName>
            <fullName>Cholecystokinin-5</fullName>
            <shortName>CCK5</shortName>
        </recommendedName>
    </component>
</protein>
<organism>
    <name type="scientific">Sus scrofa</name>
    <name type="common">Pig</name>
    <dbReference type="NCBI Taxonomy" id="9823"/>
    <lineage>
        <taxon>Eukaryota</taxon>
        <taxon>Metazoa</taxon>
        <taxon>Chordata</taxon>
        <taxon>Craniata</taxon>
        <taxon>Vertebrata</taxon>
        <taxon>Euteleostomi</taxon>
        <taxon>Mammalia</taxon>
        <taxon>Eutheria</taxon>
        <taxon>Laurasiatheria</taxon>
        <taxon>Artiodactyla</taxon>
        <taxon>Suina</taxon>
        <taxon>Suidae</taxon>
        <taxon>Sus</taxon>
    </lineage>
</organism>
<evidence type="ECO:0000250" key="1">
    <source>
        <dbReference type="UniProtKB" id="P06307"/>
    </source>
</evidence>
<evidence type="ECO:0000250" key="2">
    <source>
        <dbReference type="UniProtKB" id="Q9TS44"/>
    </source>
</evidence>
<evidence type="ECO:0000255" key="3"/>
<evidence type="ECO:0000269" key="4">
    <source>
    </source>
</evidence>
<evidence type="ECO:0000269" key="5">
    <source>
    </source>
</evidence>
<evidence type="ECO:0000269" key="6">
    <source>
    </source>
</evidence>
<evidence type="ECO:0000269" key="7">
    <source ref="2"/>
</evidence>
<evidence type="ECO:0000305" key="8"/>
<evidence type="ECO:0000305" key="9">
    <source>
    </source>
</evidence>
<comment type="function">
    <text evidence="2">This peptide hormone induces gall bladder contraction and the release of pancreatic enzymes in the gut. Its function in the brain is not clear. Binding to CCK-A receptors stimulates amylase release from the pancreas, binding to CCK-B receptors stimulates gastric acid secretion.</text>
</comment>
<comment type="subunit">
    <text evidence="2">Binds to CCK-A receptors in the pancreas and CCK-B receptors in the brain.</text>
</comment>
<comment type="subcellular location">
    <subcellularLocation>
        <location evidence="9">Secreted</location>
    </subcellularLocation>
</comment>
<comment type="tissue specificity">
    <text evidence="5">Synthesized in both cerebral cortex and duodenal mucosa.</text>
</comment>
<comment type="PTM">
    <text>The precursor is cleaved by proteases to produce a number of active cholecystokinins. Brain contains CCK-octapeptide (CCK8) and several CCK-desoctapeptides; whereas pig gut contains intact CCK33, CCK39, and CCK58 as well as CCK-octapeptide and the CCK-desoctapeptides. Distribution differences are due to tissue-specific post-translational processing events.</text>
</comment>
<comment type="PTM">
    <molecule>Cholecystokinin-5</molecule>
    <text evidence="1">The precursor is cleaved by ACE, which removes the Gly-Arg-Arg peptide at the C-terminus, leading to mature hormone.</text>
</comment>
<comment type="similarity">
    <text evidence="8">Belongs to the gastrin/cholecystokinin family.</text>
</comment>
<reference key="1">
    <citation type="journal article" date="1984" name="Proc. Natl. Acad. Sci. U.S.A.">
        <title>Cloned cDNA to cholecystokinin mRNA predicts an identical preprocholecystokinin in pig brain and gut.</title>
        <authorList>
            <person name="Gubler U."/>
            <person name="Chua A.O."/>
            <person name="Hoffman B.J."/>
            <person name="Collier K.J."/>
            <person name="Eng J."/>
        </authorList>
    </citation>
    <scope>NUCLEOTIDE SEQUENCE [MRNA]</scope>
    <scope>TISSUE SPECIFICITY</scope>
</reference>
<reference key="2">
    <citation type="submission" date="1970-08" db="PIR data bank">
        <authorList>
            <person name="Mutt V."/>
            <person name="Jorpes J.E."/>
        </authorList>
    </citation>
    <scope>PROTEIN SEQUENCE OF 70-102</scope>
</reference>
<reference key="3">
    <citation type="journal article" date="1970" name="J. Am. Chem. Soc.">
        <title>Synthesis of cholecystokinin-pancreozymin. I. The C-terminal dodecapeptide.</title>
        <authorList>
            <person name="Ondetti M.A."/>
            <person name="Pluscec J."/>
            <person name="Sabo E.F."/>
            <person name="Sheehan J.T."/>
            <person name="Williams N."/>
        </authorList>
    </citation>
    <scope>PROTEIN SEQUENCE OF 91-102</scope>
    <scope>SULFATION AT TYR-96</scope>
    <scope>AMIDATION AT PHE-102</scope>
</reference>
<reference key="4">
    <citation type="journal article" date="1993" name="Protein Sci.">
        <title>Analysis of sequence requirements for protein tyrosine sulfation.</title>
        <authorList>
            <person name="Rosenquist G.L."/>
            <person name="Nicholas H.B."/>
        </authorList>
    </citation>
    <scope>SULFATION AT TYR-96; TYR-110 AND TYR-112</scope>
</reference>
<sequence>MNGGLCLCVLMAVLAAGTLAQPVPPADSAVPGAQEEEAHRRQLRAVQKVDGESRAHLGALLARYIQQARKAPSGRVSMIKNLQSLDPSHRISDRDYMGWMDFGRRSAEEYEYTS</sequence>
<accession>P01356</accession>